<feature type="chain" id="PRO_1000085988" description="Small ribosomal subunit protein uS4">
    <location>
        <begin position="1"/>
        <end position="206"/>
    </location>
</feature>
<feature type="domain" description="S4 RNA-binding" evidence="1">
    <location>
        <begin position="94"/>
        <end position="156"/>
    </location>
</feature>
<keyword id="KW-1185">Reference proteome</keyword>
<keyword id="KW-0687">Ribonucleoprotein</keyword>
<keyword id="KW-0689">Ribosomal protein</keyword>
<keyword id="KW-0694">RNA-binding</keyword>
<keyword id="KW-0699">rRNA-binding</keyword>
<comment type="function">
    <text evidence="1">One of the primary rRNA binding proteins, it binds directly to 16S rRNA where it nucleates assembly of the body of the 30S subunit.</text>
</comment>
<comment type="function">
    <text evidence="1">With S5 and S12 plays an important role in translational accuracy.</text>
</comment>
<comment type="subunit">
    <text evidence="1">Part of the 30S ribosomal subunit. Contacts protein S5. The interaction surface between S4 and S5 is involved in control of translational fidelity.</text>
</comment>
<comment type="similarity">
    <text evidence="1">Belongs to the universal ribosomal protein uS4 family.</text>
</comment>
<name>RS4_ROSCS</name>
<protein>
    <recommendedName>
        <fullName evidence="1">Small ribosomal subunit protein uS4</fullName>
    </recommendedName>
    <alternativeName>
        <fullName evidence="2">30S ribosomal protein S4</fullName>
    </alternativeName>
</protein>
<accession>A7NR37</accession>
<dbReference type="EMBL" id="CP000804">
    <property type="protein sequence ID" value="ABU60033.1"/>
    <property type="molecule type" value="Genomic_DNA"/>
</dbReference>
<dbReference type="RefSeq" id="WP_012122456.1">
    <property type="nucleotide sequence ID" value="NC_009767.1"/>
</dbReference>
<dbReference type="SMR" id="A7NR37"/>
<dbReference type="STRING" id="383372.Rcas_4000"/>
<dbReference type="KEGG" id="rca:Rcas_4000"/>
<dbReference type="eggNOG" id="COG0522">
    <property type="taxonomic scope" value="Bacteria"/>
</dbReference>
<dbReference type="HOGENOM" id="CLU_092403_0_1_0"/>
<dbReference type="OrthoDB" id="9803672at2"/>
<dbReference type="Proteomes" id="UP000000263">
    <property type="component" value="Chromosome"/>
</dbReference>
<dbReference type="GO" id="GO:0015935">
    <property type="term" value="C:small ribosomal subunit"/>
    <property type="evidence" value="ECO:0007669"/>
    <property type="project" value="InterPro"/>
</dbReference>
<dbReference type="GO" id="GO:0019843">
    <property type="term" value="F:rRNA binding"/>
    <property type="evidence" value="ECO:0007669"/>
    <property type="project" value="UniProtKB-UniRule"/>
</dbReference>
<dbReference type="GO" id="GO:0003735">
    <property type="term" value="F:structural constituent of ribosome"/>
    <property type="evidence" value="ECO:0007669"/>
    <property type="project" value="InterPro"/>
</dbReference>
<dbReference type="GO" id="GO:0042274">
    <property type="term" value="P:ribosomal small subunit biogenesis"/>
    <property type="evidence" value="ECO:0007669"/>
    <property type="project" value="TreeGrafter"/>
</dbReference>
<dbReference type="GO" id="GO:0006412">
    <property type="term" value="P:translation"/>
    <property type="evidence" value="ECO:0007669"/>
    <property type="project" value="UniProtKB-UniRule"/>
</dbReference>
<dbReference type="CDD" id="cd00165">
    <property type="entry name" value="S4"/>
    <property type="match status" value="1"/>
</dbReference>
<dbReference type="FunFam" id="3.10.290.10:FF:000001">
    <property type="entry name" value="30S ribosomal protein S4"/>
    <property type="match status" value="1"/>
</dbReference>
<dbReference type="Gene3D" id="1.10.1050.10">
    <property type="entry name" value="Ribosomal Protein S4 Delta 41, Chain A, domain 1"/>
    <property type="match status" value="1"/>
</dbReference>
<dbReference type="Gene3D" id="3.10.290.10">
    <property type="entry name" value="RNA-binding S4 domain"/>
    <property type="match status" value="1"/>
</dbReference>
<dbReference type="HAMAP" id="MF_01306_B">
    <property type="entry name" value="Ribosomal_uS4_B"/>
    <property type="match status" value="1"/>
</dbReference>
<dbReference type="InterPro" id="IPR022801">
    <property type="entry name" value="Ribosomal_uS4"/>
</dbReference>
<dbReference type="InterPro" id="IPR005709">
    <property type="entry name" value="Ribosomal_uS4_bac-type"/>
</dbReference>
<dbReference type="InterPro" id="IPR018079">
    <property type="entry name" value="Ribosomal_uS4_CS"/>
</dbReference>
<dbReference type="InterPro" id="IPR001912">
    <property type="entry name" value="Ribosomal_uS4_N"/>
</dbReference>
<dbReference type="InterPro" id="IPR002942">
    <property type="entry name" value="S4_RNA-bd"/>
</dbReference>
<dbReference type="InterPro" id="IPR036986">
    <property type="entry name" value="S4_RNA-bd_sf"/>
</dbReference>
<dbReference type="NCBIfam" id="NF003717">
    <property type="entry name" value="PRK05327.1"/>
    <property type="match status" value="1"/>
</dbReference>
<dbReference type="NCBIfam" id="TIGR01017">
    <property type="entry name" value="rpsD_bact"/>
    <property type="match status" value="1"/>
</dbReference>
<dbReference type="PANTHER" id="PTHR11831">
    <property type="entry name" value="30S 40S RIBOSOMAL PROTEIN"/>
    <property type="match status" value="1"/>
</dbReference>
<dbReference type="PANTHER" id="PTHR11831:SF4">
    <property type="entry name" value="SMALL RIBOSOMAL SUBUNIT PROTEIN US4M"/>
    <property type="match status" value="1"/>
</dbReference>
<dbReference type="Pfam" id="PF00163">
    <property type="entry name" value="Ribosomal_S4"/>
    <property type="match status" value="1"/>
</dbReference>
<dbReference type="Pfam" id="PF01479">
    <property type="entry name" value="S4"/>
    <property type="match status" value="1"/>
</dbReference>
<dbReference type="SMART" id="SM01390">
    <property type="entry name" value="Ribosomal_S4"/>
    <property type="match status" value="1"/>
</dbReference>
<dbReference type="SMART" id="SM00363">
    <property type="entry name" value="S4"/>
    <property type="match status" value="1"/>
</dbReference>
<dbReference type="SUPFAM" id="SSF55174">
    <property type="entry name" value="Alpha-L RNA-binding motif"/>
    <property type="match status" value="1"/>
</dbReference>
<dbReference type="PROSITE" id="PS00632">
    <property type="entry name" value="RIBOSOMAL_S4"/>
    <property type="match status" value="1"/>
</dbReference>
<dbReference type="PROSITE" id="PS50889">
    <property type="entry name" value="S4"/>
    <property type="match status" value="1"/>
</dbReference>
<gene>
    <name evidence="1" type="primary">rpsD</name>
    <name type="ordered locus">Rcas_4000</name>
</gene>
<organism>
    <name type="scientific">Roseiflexus castenholzii (strain DSM 13941 / HLO8)</name>
    <dbReference type="NCBI Taxonomy" id="383372"/>
    <lineage>
        <taxon>Bacteria</taxon>
        <taxon>Bacillati</taxon>
        <taxon>Chloroflexota</taxon>
        <taxon>Chloroflexia</taxon>
        <taxon>Chloroflexales</taxon>
        <taxon>Roseiflexineae</taxon>
        <taxon>Roseiflexaceae</taxon>
        <taxon>Roseiflexus</taxon>
    </lineage>
</organism>
<reference key="1">
    <citation type="submission" date="2007-08" db="EMBL/GenBank/DDBJ databases">
        <title>Complete sequence of Roseiflexus castenholzii DSM 13941.</title>
        <authorList>
            <consortium name="US DOE Joint Genome Institute"/>
            <person name="Copeland A."/>
            <person name="Lucas S."/>
            <person name="Lapidus A."/>
            <person name="Barry K."/>
            <person name="Glavina del Rio T."/>
            <person name="Dalin E."/>
            <person name="Tice H."/>
            <person name="Pitluck S."/>
            <person name="Thompson L.S."/>
            <person name="Brettin T."/>
            <person name="Bruce D."/>
            <person name="Detter J.C."/>
            <person name="Han C."/>
            <person name="Tapia R."/>
            <person name="Schmutz J."/>
            <person name="Larimer F."/>
            <person name="Land M."/>
            <person name="Hauser L."/>
            <person name="Kyrpides N."/>
            <person name="Mikhailova N."/>
            <person name="Bryant D.A."/>
            <person name="Hanada S."/>
            <person name="Tsukatani Y."/>
            <person name="Richardson P."/>
        </authorList>
    </citation>
    <scope>NUCLEOTIDE SEQUENCE [LARGE SCALE GENOMIC DNA]</scope>
    <source>
        <strain>DSM 13941 / HLO8</strain>
    </source>
</reference>
<proteinExistence type="inferred from homology"/>
<evidence type="ECO:0000255" key="1">
    <source>
        <dbReference type="HAMAP-Rule" id="MF_01306"/>
    </source>
</evidence>
<evidence type="ECO:0000305" key="2"/>
<sequence>MARYIGPVGKISRRLGIGITEKGQRILAKRPFPPGQHGPSARRRQVSDYGLQLLEKQKARYIYGVLERQFRRIFEKAQRFPGETGAYLLILLERRLDNVVYRLGFATTRAQARQLVTHGHITVNGRKTNIPSYTVRVGETIAVRPESRRRMYFKNLVESGALAKHKAPDWLRLNPADLSGEVVAMPRREDAEPGINEQLIVEFYSR</sequence>